<gene>
    <name evidence="1" type="primary">acpS</name>
    <name type="ordered locus">VC_2457</name>
</gene>
<reference key="1">
    <citation type="journal article" date="2000" name="Nature">
        <title>DNA sequence of both chromosomes of the cholera pathogen Vibrio cholerae.</title>
        <authorList>
            <person name="Heidelberg J.F."/>
            <person name="Eisen J.A."/>
            <person name="Nelson W.C."/>
            <person name="Clayton R.A."/>
            <person name="Gwinn M.L."/>
            <person name="Dodson R.J."/>
            <person name="Haft D.H."/>
            <person name="Hickey E.K."/>
            <person name="Peterson J.D."/>
            <person name="Umayam L.A."/>
            <person name="Gill S.R."/>
            <person name="Nelson K.E."/>
            <person name="Read T.D."/>
            <person name="Tettelin H."/>
            <person name="Richardson D.L."/>
            <person name="Ermolaeva M.D."/>
            <person name="Vamathevan J.J."/>
            <person name="Bass S."/>
            <person name="Qin H."/>
            <person name="Dragoi I."/>
            <person name="Sellers P."/>
            <person name="McDonald L.A."/>
            <person name="Utterback T.R."/>
            <person name="Fleischmann R.D."/>
            <person name="Nierman W.C."/>
            <person name="White O."/>
            <person name="Salzberg S.L."/>
            <person name="Smith H.O."/>
            <person name="Colwell R.R."/>
            <person name="Mekalanos J.J."/>
            <person name="Venter J.C."/>
            <person name="Fraser C.M."/>
        </authorList>
    </citation>
    <scope>NUCLEOTIDE SEQUENCE [LARGE SCALE GENOMIC DNA]</scope>
    <source>
        <strain>ATCC 39315 / El Tor Inaba N16961</strain>
    </source>
</reference>
<dbReference type="EC" id="2.7.8.7" evidence="1"/>
<dbReference type="EMBL" id="AE003852">
    <property type="protein sequence ID" value="AAF95599.1"/>
    <property type="molecule type" value="Genomic_DNA"/>
</dbReference>
<dbReference type="PIR" id="F82072">
    <property type="entry name" value="F82072"/>
</dbReference>
<dbReference type="RefSeq" id="NP_232086.1">
    <property type="nucleotide sequence ID" value="NC_002505.1"/>
</dbReference>
<dbReference type="RefSeq" id="WP_000635063.1">
    <property type="nucleotide sequence ID" value="NZ_LT906614.1"/>
</dbReference>
<dbReference type="PDB" id="3QMN">
    <property type="method" value="X-ray"/>
    <property type="resolution" value="1.85 A"/>
    <property type="chains" value="A/B/C/D/E/F/G/H/I/J/K/L/M/N/O/P/Q/R/S/T/U/V/W/X=1-126"/>
</dbReference>
<dbReference type="PDBsum" id="3QMN"/>
<dbReference type="SMR" id="Q9KPB6"/>
<dbReference type="STRING" id="243277.VC_2457"/>
<dbReference type="DNASU" id="2612999"/>
<dbReference type="EnsemblBacteria" id="AAF95599">
    <property type="protein sequence ID" value="AAF95599"/>
    <property type="gene ID" value="VC_2457"/>
</dbReference>
<dbReference type="KEGG" id="vch:VC_2457"/>
<dbReference type="PATRIC" id="fig|243277.26.peg.2342"/>
<dbReference type="eggNOG" id="COG0736">
    <property type="taxonomic scope" value="Bacteria"/>
</dbReference>
<dbReference type="HOGENOM" id="CLU_089696_3_1_6"/>
<dbReference type="Proteomes" id="UP000000584">
    <property type="component" value="Chromosome 1"/>
</dbReference>
<dbReference type="GO" id="GO:0005737">
    <property type="term" value="C:cytoplasm"/>
    <property type="evidence" value="ECO:0007669"/>
    <property type="project" value="UniProtKB-SubCell"/>
</dbReference>
<dbReference type="GO" id="GO:0008897">
    <property type="term" value="F:holo-[acyl-carrier-protein] synthase activity"/>
    <property type="evidence" value="ECO:0007669"/>
    <property type="project" value="UniProtKB-UniRule"/>
</dbReference>
<dbReference type="GO" id="GO:0000287">
    <property type="term" value="F:magnesium ion binding"/>
    <property type="evidence" value="ECO:0007669"/>
    <property type="project" value="UniProtKB-UniRule"/>
</dbReference>
<dbReference type="GO" id="GO:0006633">
    <property type="term" value="P:fatty acid biosynthetic process"/>
    <property type="evidence" value="ECO:0007669"/>
    <property type="project" value="UniProtKB-UniRule"/>
</dbReference>
<dbReference type="FunFam" id="3.90.470.20:FF:000001">
    <property type="entry name" value="Holo-[acyl-carrier-protein] synthase"/>
    <property type="match status" value="1"/>
</dbReference>
<dbReference type="Gene3D" id="3.90.470.20">
    <property type="entry name" value="4'-phosphopantetheinyl transferase domain"/>
    <property type="match status" value="1"/>
</dbReference>
<dbReference type="HAMAP" id="MF_00101">
    <property type="entry name" value="AcpS"/>
    <property type="match status" value="1"/>
</dbReference>
<dbReference type="InterPro" id="IPR008278">
    <property type="entry name" value="4-PPantetheinyl_Trfase_dom"/>
</dbReference>
<dbReference type="InterPro" id="IPR037143">
    <property type="entry name" value="4-PPantetheinyl_Trfase_dom_sf"/>
</dbReference>
<dbReference type="InterPro" id="IPR002582">
    <property type="entry name" value="ACPS"/>
</dbReference>
<dbReference type="InterPro" id="IPR050559">
    <property type="entry name" value="P-Pant_transferase_sf"/>
</dbReference>
<dbReference type="InterPro" id="IPR004568">
    <property type="entry name" value="Ppantetheine-prot_Trfase_dom"/>
</dbReference>
<dbReference type="NCBIfam" id="TIGR00516">
    <property type="entry name" value="acpS"/>
    <property type="match status" value="1"/>
</dbReference>
<dbReference type="NCBIfam" id="TIGR00556">
    <property type="entry name" value="pantethn_trn"/>
    <property type="match status" value="1"/>
</dbReference>
<dbReference type="PANTHER" id="PTHR12215:SF10">
    <property type="entry name" value="L-AMINOADIPATE-SEMIALDEHYDE DEHYDROGENASE-PHOSPHOPANTETHEINYL TRANSFERASE"/>
    <property type="match status" value="1"/>
</dbReference>
<dbReference type="PANTHER" id="PTHR12215">
    <property type="entry name" value="PHOSPHOPANTETHEINE TRANSFERASE"/>
    <property type="match status" value="1"/>
</dbReference>
<dbReference type="Pfam" id="PF01648">
    <property type="entry name" value="ACPS"/>
    <property type="match status" value="1"/>
</dbReference>
<dbReference type="SUPFAM" id="SSF56214">
    <property type="entry name" value="4'-phosphopantetheinyl transferase"/>
    <property type="match status" value="1"/>
</dbReference>
<protein>
    <recommendedName>
        <fullName evidence="1">Holo-[acyl-carrier-protein] synthase</fullName>
        <shortName evidence="1">Holo-ACP synthase</shortName>
        <ecNumber evidence="1">2.7.8.7</ecNumber>
    </recommendedName>
    <alternativeName>
        <fullName evidence="1">4'-phosphopantetheinyl transferase AcpS</fullName>
    </alternativeName>
</protein>
<evidence type="ECO:0000255" key="1">
    <source>
        <dbReference type="HAMAP-Rule" id="MF_00101"/>
    </source>
</evidence>
<evidence type="ECO:0007829" key="2">
    <source>
        <dbReference type="PDB" id="3QMN"/>
    </source>
</evidence>
<accession>Q9KPB6</accession>
<sequence>MIVGLGTDIAEIERVEKALARSGENFARRILTDSELEQFHASKQQGRFLAKRFAAKEAASKALGTGIAQGVTFHDFTISHDKLGKPLLILSGQAAELASQLQVENIHLSISDERHYAMATVILERR</sequence>
<feature type="chain" id="PRO_0000175726" description="Holo-[acyl-carrier-protein] synthase">
    <location>
        <begin position="1"/>
        <end position="126"/>
    </location>
</feature>
<feature type="binding site" evidence="1">
    <location>
        <position position="8"/>
    </location>
    <ligand>
        <name>Mg(2+)</name>
        <dbReference type="ChEBI" id="CHEBI:18420"/>
    </ligand>
</feature>
<feature type="binding site" evidence="1">
    <location>
        <position position="57"/>
    </location>
    <ligand>
        <name>Mg(2+)</name>
        <dbReference type="ChEBI" id="CHEBI:18420"/>
    </ligand>
</feature>
<feature type="strand" evidence="2">
    <location>
        <begin position="1"/>
        <end position="11"/>
    </location>
</feature>
<feature type="helix" evidence="2">
    <location>
        <begin position="12"/>
        <end position="30"/>
    </location>
</feature>
<feature type="helix" evidence="2">
    <location>
        <begin position="33"/>
        <end position="41"/>
    </location>
</feature>
<feature type="helix" evidence="2">
    <location>
        <begin position="45"/>
        <end position="62"/>
    </location>
</feature>
<feature type="helix" evidence="2">
    <location>
        <begin position="73"/>
        <end position="75"/>
    </location>
</feature>
<feature type="strand" evidence="2">
    <location>
        <begin position="76"/>
        <end position="80"/>
    </location>
</feature>
<feature type="strand" evidence="2">
    <location>
        <begin position="86"/>
        <end position="90"/>
    </location>
</feature>
<feature type="helix" evidence="2">
    <location>
        <begin position="92"/>
        <end position="100"/>
    </location>
</feature>
<feature type="strand" evidence="2">
    <location>
        <begin position="105"/>
        <end position="112"/>
    </location>
</feature>
<feature type="strand" evidence="2">
    <location>
        <begin position="114"/>
        <end position="125"/>
    </location>
</feature>
<keyword id="KW-0002">3D-structure</keyword>
<keyword id="KW-0963">Cytoplasm</keyword>
<keyword id="KW-0275">Fatty acid biosynthesis</keyword>
<keyword id="KW-0276">Fatty acid metabolism</keyword>
<keyword id="KW-0444">Lipid biosynthesis</keyword>
<keyword id="KW-0443">Lipid metabolism</keyword>
<keyword id="KW-0460">Magnesium</keyword>
<keyword id="KW-0479">Metal-binding</keyword>
<keyword id="KW-1185">Reference proteome</keyword>
<keyword id="KW-0808">Transferase</keyword>
<comment type="function">
    <text evidence="1">Transfers the 4'-phosphopantetheine moiety from coenzyme A to a Ser of acyl-carrier-protein.</text>
</comment>
<comment type="catalytic activity">
    <reaction evidence="1">
        <text>apo-[ACP] + CoA = holo-[ACP] + adenosine 3',5'-bisphosphate + H(+)</text>
        <dbReference type="Rhea" id="RHEA:12068"/>
        <dbReference type="Rhea" id="RHEA-COMP:9685"/>
        <dbReference type="Rhea" id="RHEA-COMP:9690"/>
        <dbReference type="ChEBI" id="CHEBI:15378"/>
        <dbReference type="ChEBI" id="CHEBI:29999"/>
        <dbReference type="ChEBI" id="CHEBI:57287"/>
        <dbReference type="ChEBI" id="CHEBI:58343"/>
        <dbReference type="ChEBI" id="CHEBI:64479"/>
        <dbReference type="EC" id="2.7.8.7"/>
    </reaction>
</comment>
<comment type="cofactor">
    <cofactor evidence="1">
        <name>Mg(2+)</name>
        <dbReference type="ChEBI" id="CHEBI:18420"/>
    </cofactor>
</comment>
<comment type="subcellular location">
    <subcellularLocation>
        <location evidence="1">Cytoplasm</location>
    </subcellularLocation>
</comment>
<comment type="similarity">
    <text evidence="1">Belongs to the P-Pant transferase superfamily. AcpS family.</text>
</comment>
<name>ACPS_VIBCH</name>
<organism>
    <name type="scientific">Vibrio cholerae serotype O1 (strain ATCC 39315 / El Tor Inaba N16961)</name>
    <dbReference type="NCBI Taxonomy" id="243277"/>
    <lineage>
        <taxon>Bacteria</taxon>
        <taxon>Pseudomonadati</taxon>
        <taxon>Pseudomonadota</taxon>
        <taxon>Gammaproteobacteria</taxon>
        <taxon>Vibrionales</taxon>
        <taxon>Vibrionaceae</taxon>
        <taxon>Vibrio</taxon>
    </lineage>
</organism>
<proteinExistence type="evidence at protein level"/>